<name>SYDND_PSEF5</name>
<evidence type="ECO:0000255" key="1">
    <source>
        <dbReference type="HAMAP-Rule" id="MF_00044"/>
    </source>
</evidence>
<reference key="1">
    <citation type="journal article" date="2005" name="Nat. Biotechnol.">
        <title>Complete genome sequence of the plant commensal Pseudomonas fluorescens Pf-5.</title>
        <authorList>
            <person name="Paulsen I.T."/>
            <person name="Press C.M."/>
            <person name="Ravel J."/>
            <person name="Kobayashi D.Y."/>
            <person name="Myers G.S.A."/>
            <person name="Mavrodi D.V."/>
            <person name="DeBoy R.T."/>
            <person name="Seshadri R."/>
            <person name="Ren Q."/>
            <person name="Madupu R."/>
            <person name="Dodson R.J."/>
            <person name="Durkin A.S."/>
            <person name="Brinkac L.M."/>
            <person name="Daugherty S.C."/>
            <person name="Sullivan S.A."/>
            <person name="Rosovitz M.J."/>
            <person name="Gwinn M.L."/>
            <person name="Zhou L."/>
            <person name="Schneider D.J."/>
            <person name="Cartinhour S.W."/>
            <person name="Nelson W.C."/>
            <person name="Weidman J."/>
            <person name="Watkins K."/>
            <person name="Tran K."/>
            <person name="Khouri H."/>
            <person name="Pierson E.A."/>
            <person name="Pierson L.S. III"/>
            <person name="Thomashow L.S."/>
            <person name="Loper J.E."/>
        </authorList>
    </citation>
    <scope>NUCLEOTIDE SEQUENCE [LARGE SCALE GENOMIC DNA]</scope>
    <source>
        <strain>ATCC BAA-477 / NRRL B-23932 / Pf-5</strain>
    </source>
</reference>
<comment type="function">
    <text evidence="1">Aspartyl-tRNA synthetase with relaxed tRNA specificity since it is able to aspartylate not only its cognate tRNA(Asp) but also tRNA(Asn). Reaction proceeds in two steps: L-aspartate is first activated by ATP to form Asp-AMP and then transferred to the acceptor end of tRNA(Asp/Asn).</text>
</comment>
<comment type="catalytic activity">
    <reaction evidence="1">
        <text>tRNA(Asx) + L-aspartate + ATP = L-aspartyl-tRNA(Asx) + AMP + diphosphate</text>
        <dbReference type="Rhea" id="RHEA:18349"/>
        <dbReference type="Rhea" id="RHEA-COMP:9710"/>
        <dbReference type="Rhea" id="RHEA-COMP:9711"/>
        <dbReference type="ChEBI" id="CHEBI:29991"/>
        <dbReference type="ChEBI" id="CHEBI:30616"/>
        <dbReference type="ChEBI" id="CHEBI:33019"/>
        <dbReference type="ChEBI" id="CHEBI:78442"/>
        <dbReference type="ChEBI" id="CHEBI:78516"/>
        <dbReference type="ChEBI" id="CHEBI:456215"/>
        <dbReference type="EC" id="6.1.1.23"/>
    </reaction>
</comment>
<comment type="subunit">
    <text evidence="1">Homodimer.</text>
</comment>
<comment type="subcellular location">
    <subcellularLocation>
        <location evidence="1">Cytoplasm</location>
    </subcellularLocation>
</comment>
<comment type="similarity">
    <text evidence="1">Belongs to the class-II aminoacyl-tRNA synthetase family. Type 1 subfamily.</text>
</comment>
<sequence>MMRSHYCGQLNESLEGQEVTLCGWVHRRRDHGGVIFLDIRDREGLAQVVFDPDRAETFAAADRVRSEYVVKITGKVRLRPAGAGNANMASGMIEVLGYELEVLNEAETPPFPLNEYSDVGEETRLRYRFIDLRRPEMAEKLRLRSRMTTSIRRYLDENGFLDVETPILTRATPEGARDYLVPSRTHAGSFFALPQSPQLFKQLLMVAGFDRYYQIAKCFRDEDLRADRQPEFTQIDIETSFLDEKDIMGLTEGMIRNLFKEVLGLEFGEFPHMTFEEAMRRYGSDKPDLRNPLELVDVADQLKEVEFKVFSGPANDPKCRIAALRVPGGASMPRKQIDDYTKFVGIYGAKGLAYIKVNERAKGVEGLQSPIVKNIPEANLNVILDRVGAVDGDIVFFGADKAKIVSEALGALRIKLGHDLNLLTCEWAPMWVVDFPMFEENDDGSFTALHHPFTAPKCSPEELEANPATALSRAYDMVLNGTELGGGSIRIHRKEMQQAVFRLLGISEAEQEEKFGFLLDALKYGAPPHGGLAFGLDRLVMLMTGAQSIREVIAFPKTQSAACVMTQAPGLVDAKALRELHIRLREQPKAE</sequence>
<gene>
    <name evidence="1" type="primary">aspS</name>
    <name type="ordered locus">PFL_4767</name>
</gene>
<keyword id="KW-0030">Aminoacyl-tRNA synthetase</keyword>
<keyword id="KW-0067">ATP-binding</keyword>
<keyword id="KW-0963">Cytoplasm</keyword>
<keyword id="KW-0436">Ligase</keyword>
<keyword id="KW-0547">Nucleotide-binding</keyword>
<keyword id="KW-0648">Protein biosynthesis</keyword>
<proteinExistence type="inferred from homology"/>
<organism>
    <name type="scientific">Pseudomonas fluorescens (strain ATCC BAA-477 / NRRL B-23932 / Pf-5)</name>
    <dbReference type="NCBI Taxonomy" id="220664"/>
    <lineage>
        <taxon>Bacteria</taxon>
        <taxon>Pseudomonadati</taxon>
        <taxon>Pseudomonadota</taxon>
        <taxon>Gammaproteobacteria</taxon>
        <taxon>Pseudomonadales</taxon>
        <taxon>Pseudomonadaceae</taxon>
        <taxon>Pseudomonas</taxon>
    </lineage>
</organism>
<dbReference type="EC" id="6.1.1.23" evidence="1"/>
<dbReference type="EMBL" id="CP000076">
    <property type="protein sequence ID" value="AAY93997.1"/>
    <property type="molecule type" value="Genomic_DNA"/>
</dbReference>
<dbReference type="RefSeq" id="WP_011063022.1">
    <property type="nucleotide sequence ID" value="NC_004129.6"/>
</dbReference>
<dbReference type="SMR" id="Q4K7D5"/>
<dbReference type="STRING" id="220664.PFL_4767"/>
<dbReference type="GeneID" id="57477747"/>
<dbReference type="KEGG" id="pfl:PFL_4767"/>
<dbReference type="PATRIC" id="fig|220664.5.peg.4877"/>
<dbReference type="eggNOG" id="COG0173">
    <property type="taxonomic scope" value="Bacteria"/>
</dbReference>
<dbReference type="HOGENOM" id="CLU_014330_3_2_6"/>
<dbReference type="Proteomes" id="UP000008540">
    <property type="component" value="Chromosome"/>
</dbReference>
<dbReference type="GO" id="GO:0005737">
    <property type="term" value="C:cytoplasm"/>
    <property type="evidence" value="ECO:0007669"/>
    <property type="project" value="UniProtKB-SubCell"/>
</dbReference>
<dbReference type="GO" id="GO:0004815">
    <property type="term" value="F:aspartate-tRNA ligase activity"/>
    <property type="evidence" value="ECO:0007669"/>
    <property type="project" value="UniProtKB-UniRule"/>
</dbReference>
<dbReference type="GO" id="GO:0050560">
    <property type="term" value="F:aspartate-tRNA(Asn) ligase activity"/>
    <property type="evidence" value="ECO:0007669"/>
    <property type="project" value="UniProtKB-EC"/>
</dbReference>
<dbReference type="GO" id="GO:0005524">
    <property type="term" value="F:ATP binding"/>
    <property type="evidence" value="ECO:0007669"/>
    <property type="project" value="UniProtKB-UniRule"/>
</dbReference>
<dbReference type="GO" id="GO:0003676">
    <property type="term" value="F:nucleic acid binding"/>
    <property type="evidence" value="ECO:0007669"/>
    <property type="project" value="InterPro"/>
</dbReference>
<dbReference type="GO" id="GO:0006422">
    <property type="term" value="P:aspartyl-tRNA aminoacylation"/>
    <property type="evidence" value="ECO:0007669"/>
    <property type="project" value="UniProtKB-UniRule"/>
</dbReference>
<dbReference type="CDD" id="cd00777">
    <property type="entry name" value="AspRS_core"/>
    <property type="match status" value="1"/>
</dbReference>
<dbReference type="CDD" id="cd04317">
    <property type="entry name" value="EcAspRS_like_N"/>
    <property type="match status" value="1"/>
</dbReference>
<dbReference type="Gene3D" id="3.30.930.10">
    <property type="entry name" value="Bira Bifunctional Protein, Domain 2"/>
    <property type="match status" value="1"/>
</dbReference>
<dbReference type="Gene3D" id="3.30.1360.30">
    <property type="entry name" value="GAD-like domain"/>
    <property type="match status" value="1"/>
</dbReference>
<dbReference type="Gene3D" id="2.40.50.140">
    <property type="entry name" value="Nucleic acid-binding proteins"/>
    <property type="match status" value="1"/>
</dbReference>
<dbReference type="HAMAP" id="MF_00044">
    <property type="entry name" value="Asp_tRNA_synth_type1"/>
    <property type="match status" value="1"/>
</dbReference>
<dbReference type="InterPro" id="IPR004364">
    <property type="entry name" value="Aa-tRNA-synt_II"/>
</dbReference>
<dbReference type="InterPro" id="IPR006195">
    <property type="entry name" value="aa-tRNA-synth_II"/>
</dbReference>
<dbReference type="InterPro" id="IPR045864">
    <property type="entry name" value="aa-tRNA-synth_II/BPL/LPL"/>
</dbReference>
<dbReference type="InterPro" id="IPR004524">
    <property type="entry name" value="Asp-tRNA-ligase_1"/>
</dbReference>
<dbReference type="InterPro" id="IPR047089">
    <property type="entry name" value="Asp-tRNA-ligase_1_N"/>
</dbReference>
<dbReference type="InterPro" id="IPR002312">
    <property type="entry name" value="Asp/Asn-tRNA-synth_IIb"/>
</dbReference>
<dbReference type="InterPro" id="IPR047090">
    <property type="entry name" value="AspRS_core"/>
</dbReference>
<dbReference type="InterPro" id="IPR004115">
    <property type="entry name" value="GAD-like_sf"/>
</dbReference>
<dbReference type="InterPro" id="IPR029351">
    <property type="entry name" value="GAD_dom"/>
</dbReference>
<dbReference type="InterPro" id="IPR012340">
    <property type="entry name" value="NA-bd_OB-fold"/>
</dbReference>
<dbReference type="InterPro" id="IPR004365">
    <property type="entry name" value="NA-bd_OB_tRNA"/>
</dbReference>
<dbReference type="NCBIfam" id="TIGR00459">
    <property type="entry name" value="aspS_bact"/>
    <property type="match status" value="1"/>
</dbReference>
<dbReference type="NCBIfam" id="NF001750">
    <property type="entry name" value="PRK00476.1"/>
    <property type="match status" value="1"/>
</dbReference>
<dbReference type="PANTHER" id="PTHR22594:SF5">
    <property type="entry name" value="ASPARTATE--TRNA LIGASE, MITOCHONDRIAL"/>
    <property type="match status" value="1"/>
</dbReference>
<dbReference type="PANTHER" id="PTHR22594">
    <property type="entry name" value="ASPARTYL/LYSYL-TRNA SYNTHETASE"/>
    <property type="match status" value="1"/>
</dbReference>
<dbReference type="Pfam" id="PF02938">
    <property type="entry name" value="GAD"/>
    <property type="match status" value="1"/>
</dbReference>
<dbReference type="Pfam" id="PF00152">
    <property type="entry name" value="tRNA-synt_2"/>
    <property type="match status" value="1"/>
</dbReference>
<dbReference type="Pfam" id="PF01336">
    <property type="entry name" value="tRNA_anti-codon"/>
    <property type="match status" value="1"/>
</dbReference>
<dbReference type="PRINTS" id="PR01042">
    <property type="entry name" value="TRNASYNTHASP"/>
</dbReference>
<dbReference type="SUPFAM" id="SSF55681">
    <property type="entry name" value="Class II aaRS and biotin synthetases"/>
    <property type="match status" value="1"/>
</dbReference>
<dbReference type="SUPFAM" id="SSF55261">
    <property type="entry name" value="GAD domain-like"/>
    <property type="match status" value="1"/>
</dbReference>
<dbReference type="SUPFAM" id="SSF50249">
    <property type="entry name" value="Nucleic acid-binding proteins"/>
    <property type="match status" value="1"/>
</dbReference>
<dbReference type="PROSITE" id="PS50862">
    <property type="entry name" value="AA_TRNA_LIGASE_II"/>
    <property type="match status" value="1"/>
</dbReference>
<accession>Q4K7D5</accession>
<feature type="chain" id="PRO_0000235545" description="Aspartate--tRNA(Asp/Asn) ligase">
    <location>
        <begin position="1"/>
        <end position="591"/>
    </location>
</feature>
<feature type="region of interest" description="Aspartate" evidence="1">
    <location>
        <begin position="198"/>
        <end position="201"/>
    </location>
</feature>
<feature type="binding site" evidence="1">
    <location>
        <position position="174"/>
    </location>
    <ligand>
        <name>L-aspartate</name>
        <dbReference type="ChEBI" id="CHEBI:29991"/>
    </ligand>
</feature>
<feature type="binding site" evidence="1">
    <location>
        <begin position="220"/>
        <end position="222"/>
    </location>
    <ligand>
        <name>ATP</name>
        <dbReference type="ChEBI" id="CHEBI:30616"/>
    </ligand>
</feature>
<feature type="binding site" evidence="1">
    <location>
        <position position="220"/>
    </location>
    <ligand>
        <name>L-aspartate</name>
        <dbReference type="ChEBI" id="CHEBI:29991"/>
    </ligand>
</feature>
<feature type="binding site" evidence="1">
    <location>
        <position position="229"/>
    </location>
    <ligand>
        <name>ATP</name>
        <dbReference type="ChEBI" id="CHEBI:30616"/>
    </ligand>
</feature>
<feature type="binding site" evidence="1">
    <location>
        <position position="450"/>
    </location>
    <ligand>
        <name>L-aspartate</name>
        <dbReference type="ChEBI" id="CHEBI:29991"/>
    </ligand>
</feature>
<feature type="binding site" evidence="1">
    <location>
        <position position="483"/>
    </location>
    <ligand>
        <name>ATP</name>
        <dbReference type="ChEBI" id="CHEBI:30616"/>
    </ligand>
</feature>
<feature type="binding site" evidence="1">
    <location>
        <position position="490"/>
    </location>
    <ligand>
        <name>L-aspartate</name>
        <dbReference type="ChEBI" id="CHEBI:29991"/>
    </ligand>
</feature>
<feature type="binding site" evidence="1">
    <location>
        <begin position="535"/>
        <end position="538"/>
    </location>
    <ligand>
        <name>ATP</name>
        <dbReference type="ChEBI" id="CHEBI:30616"/>
    </ligand>
</feature>
<feature type="site" description="Important for tRNA non-discrimination" evidence="1">
    <location>
        <position position="31"/>
    </location>
</feature>
<feature type="site" description="Important for tRNA non-discrimination" evidence="1">
    <location>
        <position position="82"/>
    </location>
</feature>
<protein>
    <recommendedName>
        <fullName evidence="1">Aspartate--tRNA(Asp/Asn) ligase</fullName>
        <ecNumber evidence="1">6.1.1.23</ecNumber>
    </recommendedName>
    <alternativeName>
        <fullName evidence="1">Aspartyl-tRNA synthetase</fullName>
        <shortName evidence="1">AspRS</shortName>
    </alternativeName>
    <alternativeName>
        <fullName evidence="1">Non-discriminating aspartyl-tRNA synthetase</fullName>
        <shortName evidence="1">ND-AspRS</shortName>
    </alternativeName>
</protein>